<comment type="function">
    <text evidence="3">Mast cell degranulating peptide. Inhibits granulopoiesis in human bone marrow in vitro. Causes histamine release from rat peritoneal mast cells in vitro. Does not induce apoptosis of human neutrophils in vitro.</text>
</comment>
<comment type="subcellular location">
    <subcellularLocation>
        <location evidence="3">Secreted</location>
    </subcellularLocation>
</comment>
<comment type="tissue specificity">
    <text evidence="3">Expressed by the skin glands.</text>
</comment>
<comment type="mass spectrometry" mass="2160.0" method="Plasma desorption" evidence="3"/>
<comment type="similarity">
    <text evidence="2">Belongs to the frog skin active peptide (FSAP) family. Brevinin subfamily.</text>
</comment>
<feature type="peptide" id="PRO_0000235910" description="Peptide tyrosine arginine" evidence="3">
    <location>
        <begin position="1"/>
        <end position="18"/>
    </location>
</feature>
<feature type="modified residue" description="Arginine amide" evidence="3">
    <location>
        <position position="18"/>
    </location>
</feature>
<feature type="disulfide bond" evidence="1">
    <location>
        <begin position="5"/>
        <end position="15"/>
    </location>
</feature>
<accession>P84815</accession>
<organism>
    <name type="scientific">Lithobates sevosus</name>
    <name type="common">Dusky gopher frog</name>
    <name type="synonym">Rana sevosa</name>
    <dbReference type="NCBI Taxonomy" id="299683"/>
    <lineage>
        <taxon>Eukaryota</taxon>
        <taxon>Metazoa</taxon>
        <taxon>Chordata</taxon>
        <taxon>Craniata</taxon>
        <taxon>Vertebrata</taxon>
        <taxon>Euteleostomi</taxon>
        <taxon>Amphibia</taxon>
        <taxon>Batrachia</taxon>
        <taxon>Anura</taxon>
        <taxon>Neobatrachia</taxon>
        <taxon>Ranoidea</taxon>
        <taxon>Ranidae</taxon>
        <taxon>Lithobates</taxon>
    </lineage>
</organism>
<reference evidence="4" key="1">
    <citation type="journal article" date="2005" name="Peptides">
        <title>Peptide tyrosine arginine, a potent immunomodulatory peptide isolated and structurally characterized from the skin secretions of the dusky gopher frog, Rana sevosa.</title>
        <authorList>
            <person name="Graham C."/>
            <person name="Irvine A.E."/>
            <person name="McClean S."/>
            <person name="Richter S.C."/>
            <person name="Flatt P.R."/>
            <person name="Shaw C."/>
        </authorList>
    </citation>
    <scope>PROTEIN SEQUENCE</scope>
    <scope>AMIDATION AT ARG-18</scope>
    <scope>FUNCTION</scope>
    <scope>SUBCELLULAR LOCATION</scope>
    <scope>TISSUE SPECIFICITY</scope>
    <scope>MASS SPECTROMETRY</scope>
    <source>
        <tissue evidence="3">Skin secretion</tissue>
    </source>
</reference>
<proteinExistence type="evidence at protein level"/>
<sequence length="18" mass="2162">YLKGCWTKSYPPKPCFSR</sequence>
<dbReference type="GO" id="GO:0005576">
    <property type="term" value="C:extracellular region"/>
    <property type="evidence" value="ECO:0000314"/>
    <property type="project" value="UniProtKB"/>
</dbReference>
<dbReference type="GO" id="GO:0006954">
    <property type="term" value="P:inflammatory response"/>
    <property type="evidence" value="ECO:0007669"/>
    <property type="project" value="UniProtKB-KW"/>
</dbReference>
<dbReference type="GO" id="GO:0043303">
    <property type="term" value="P:mast cell degranulation"/>
    <property type="evidence" value="ECO:0007669"/>
    <property type="project" value="UniProtKB-KW"/>
</dbReference>
<dbReference type="GO" id="GO:0050729">
    <property type="term" value="P:positive regulation of inflammatory response"/>
    <property type="evidence" value="ECO:0000314"/>
    <property type="project" value="UniProtKB"/>
</dbReference>
<dbReference type="InterPro" id="IPR032019">
    <property type="entry name" value="Frog_antimicrobial_Ranidae"/>
</dbReference>
<dbReference type="Pfam" id="PF16048">
    <property type="entry name" value="Antimicrobial23"/>
    <property type="match status" value="1"/>
</dbReference>
<evidence type="ECO:0000250" key="1">
    <source>
        <dbReference type="UniProtKB" id="Q90WP7"/>
    </source>
</evidence>
<evidence type="ECO:0000255" key="2"/>
<evidence type="ECO:0000269" key="3">
    <source>
    </source>
</evidence>
<evidence type="ECO:0000305" key="4"/>
<protein>
    <recommendedName>
        <fullName>Peptide tyrosine arginine</fullName>
    </recommendedName>
</protein>
<keyword id="KW-0027">Amidation</keyword>
<keyword id="KW-0165">Cleavage on pair of basic residues</keyword>
<keyword id="KW-0903">Direct protein sequencing</keyword>
<keyword id="KW-1015">Disulfide bond</keyword>
<keyword id="KW-0395">Inflammatory response</keyword>
<keyword id="KW-0467">Mast cell degranulation</keyword>
<keyword id="KW-0964">Secreted</keyword>
<name>PTYA_LITSE</name>